<sequence length="145" mass="15818">MKGLIQRVRHARVEVAGEIVGAIDQGLLVLVGVEREDDQARADKLLHKLLNYRVFGDEQGKMNRSLKDIGGGLLLVSQFTLAADTRSGLRPSFSSAAPPAHGEALYDYLLARARDQHPEVACGRFGAEMQVHLVNDGPVTFLLES</sequence>
<keyword id="KW-0963">Cytoplasm</keyword>
<keyword id="KW-0378">Hydrolase</keyword>
<keyword id="KW-1185">Reference proteome</keyword>
<keyword id="KW-0694">RNA-binding</keyword>
<keyword id="KW-0820">tRNA-binding</keyword>
<evidence type="ECO:0000255" key="1">
    <source>
        <dbReference type="HAMAP-Rule" id="MF_00518"/>
    </source>
</evidence>
<name>DTD_STUS1</name>
<reference key="1">
    <citation type="journal article" date="2008" name="Proc. Natl. Acad. Sci. U.S.A.">
        <title>Nitrogen fixation island and rhizosphere competence traits in the genome of root-associated Pseudomonas stutzeri A1501.</title>
        <authorList>
            <person name="Yan Y."/>
            <person name="Yang J."/>
            <person name="Dou Y."/>
            <person name="Chen M."/>
            <person name="Ping S."/>
            <person name="Peng J."/>
            <person name="Lu W."/>
            <person name="Zhang W."/>
            <person name="Yao Z."/>
            <person name="Li H."/>
            <person name="Liu W."/>
            <person name="He S."/>
            <person name="Geng L."/>
            <person name="Zhang X."/>
            <person name="Yang F."/>
            <person name="Yu H."/>
            <person name="Zhan Y."/>
            <person name="Li D."/>
            <person name="Lin Z."/>
            <person name="Wang Y."/>
            <person name="Elmerich C."/>
            <person name="Lin M."/>
            <person name="Jin Q."/>
        </authorList>
    </citation>
    <scope>NUCLEOTIDE SEQUENCE [LARGE SCALE GENOMIC DNA]</scope>
    <source>
        <strain>A1501</strain>
    </source>
</reference>
<organism>
    <name type="scientific">Stutzerimonas stutzeri (strain A1501)</name>
    <name type="common">Pseudomonas stutzeri</name>
    <dbReference type="NCBI Taxonomy" id="379731"/>
    <lineage>
        <taxon>Bacteria</taxon>
        <taxon>Pseudomonadati</taxon>
        <taxon>Pseudomonadota</taxon>
        <taxon>Gammaproteobacteria</taxon>
        <taxon>Pseudomonadales</taxon>
        <taxon>Pseudomonadaceae</taxon>
        <taxon>Stutzerimonas</taxon>
    </lineage>
</organism>
<proteinExistence type="inferred from homology"/>
<accession>A4VGD5</accession>
<protein>
    <recommendedName>
        <fullName evidence="1">D-aminoacyl-tRNA deacylase</fullName>
        <shortName evidence="1">DTD</shortName>
        <ecNumber evidence="1">3.1.1.96</ecNumber>
    </recommendedName>
    <alternativeName>
        <fullName evidence="1">Gly-tRNA(Ala) deacylase</fullName>
    </alternativeName>
</protein>
<gene>
    <name evidence="1" type="primary">dtd</name>
    <name type="ordered locus">PST_0330</name>
</gene>
<dbReference type="EC" id="3.1.1.96" evidence="1"/>
<dbReference type="EMBL" id="CP000304">
    <property type="protein sequence ID" value="ABP78036.1"/>
    <property type="molecule type" value="Genomic_DNA"/>
</dbReference>
<dbReference type="RefSeq" id="WP_011911568.1">
    <property type="nucleotide sequence ID" value="NC_009434.1"/>
</dbReference>
<dbReference type="SMR" id="A4VGD5"/>
<dbReference type="GeneID" id="66819575"/>
<dbReference type="KEGG" id="psa:PST_0330"/>
<dbReference type="eggNOG" id="COG1490">
    <property type="taxonomic scope" value="Bacteria"/>
</dbReference>
<dbReference type="HOGENOM" id="CLU_076901_1_1_6"/>
<dbReference type="Proteomes" id="UP000000233">
    <property type="component" value="Chromosome"/>
</dbReference>
<dbReference type="GO" id="GO:0005737">
    <property type="term" value="C:cytoplasm"/>
    <property type="evidence" value="ECO:0007669"/>
    <property type="project" value="UniProtKB-SubCell"/>
</dbReference>
<dbReference type="GO" id="GO:0051500">
    <property type="term" value="F:D-tyrosyl-tRNA(Tyr) deacylase activity"/>
    <property type="evidence" value="ECO:0007669"/>
    <property type="project" value="TreeGrafter"/>
</dbReference>
<dbReference type="GO" id="GO:0106026">
    <property type="term" value="F:Gly-tRNA(Ala) deacylase activity"/>
    <property type="evidence" value="ECO:0007669"/>
    <property type="project" value="UniProtKB-UniRule"/>
</dbReference>
<dbReference type="GO" id="GO:0043908">
    <property type="term" value="F:Ser(Gly)-tRNA(Ala) hydrolase activity"/>
    <property type="evidence" value="ECO:0007669"/>
    <property type="project" value="UniProtKB-UniRule"/>
</dbReference>
<dbReference type="GO" id="GO:0000049">
    <property type="term" value="F:tRNA binding"/>
    <property type="evidence" value="ECO:0007669"/>
    <property type="project" value="UniProtKB-UniRule"/>
</dbReference>
<dbReference type="GO" id="GO:0019478">
    <property type="term" value="P:D-amino acid catabolic process"/>
    <property type="evidence" value="ECO:0007669"/>
    <property type="project" value="UniProtKB-UniRule"/>
</dbReference>
<dbReference type="CDD" id="cd00563">
    <property type="entry name" value="Dtyr_deacylase"/>
    <property type="match status" value="1"/>
</dbReference>
<dbReference type="FunFam" id="3.50.80.10:FF:000001">
    <property type="entry name" value="D-aminoacyl-tRNA deacylase"/>
    <property type="match status" value="1"/>
</dbReference>
<dbReference type="Gene3D" id="3.50.80.10">
    <property type="entry name" value="D-tyrosyl-tRNA(Tyr) deacylase"/>
    <property type="match status" value="1"/>
</dbReference>
<dbReference type="HAMAP" id="MF_00518">
    <property type="entry name" value="Deacylase_Dtd"/>
    <property type="match status" value="1"/>
</dbReference>
<dbReference type="InterPro" id="IPR003732">
    <property type="entry name" value="Daa-tRNA_deacyls_DTD"/>
</dbReference>
<dbReference type="InterPro" id="IPR023509">
    <property type="entry name" value="DTD-like_sf"/>
</dbReference>
<dbReference type="NCBIfam" id="TIGR00256">
    <property type="entry name" value="D-aminoacyl-tRNA deacylase"/>
    <property type="match status" value="1"/>
</dbReference>
<dbReference type="PANTHER" id="PTHR10472:SF5">
    <property type="entry name" value="D-AMINOACYL-TRNA DEACYLASE 1"/>
    <property type="match status" value="1"/>
</dbReference>
<dbReference type="PANTHER" id="PTHR10472">
    <property type="entry name" value="D-TYROSYL-TRNA TYR DEACYLASE"/>
    <property type="match status" value="1"/>
</dbReference>
<dbReference type="Pfam" id="PF02580">
    <property type="entry name" value="Tyr_Deacylase"/>
    <property type="match status" value="1"/>
</dbReference>
<dbReference type="SUPFAM" id="SSF69500">
    <property type="entry name" value="DTD-like"/>
    <property type="match status" value="1"/>
</dbReference>
<comment type="function">
    <text evidence="1">An aminoacyl-tRNA editing enzyme that deacylates mischarged D-aminoacyl-tRNAs. Also deacylates mischarged glycyl-tRNA(Ala), protecting cells against glycine mischarging by AlaRS. Acts via tRNA-based rather than protein-based catalysis; rejects L-amino acids rather than detecting D-amino acids in the active site. By recycling D-aminoacyl-tRNA to D-amino acids and free tRNA molecules, this enzyme counteracts the toxicity associated with the formation of D-aminoacyl-tRNA entities in vivo and helps enforce protein L-homochirality.</text>
</comment>
<comment type="catalytic activity">
    <reaction evidence="1">
        <text>glycyl-tRNA(Ala) + H2O = tRNA(Ala) + glycine + H(+)</text>
        <dbReference type="Rhea" id="RHEA:53744"/>
        <dbReference type="Rhea" id="RHEA-COMP:9657"/>
        <dbReference type="Rhea" id="RHEA-COMP:13640"/>
        <dbReference type="ChEBI" id="CHEBI:15377"/>
        <dbReference type="ChEBI" id="CHEBI:15378"/>
        <dbReference type="ChEBI" id="CHEBI:57305"/>
        <dbReference type="ChEBI" id="CHEBI:78442"/>
        <dbReference type="ChEBI" id="CHEBI:78522"/>
        <dbReference type="EC" id="3.1.1.96"/>
    </reaction>
</comment>
<comment type="catalytic activity">
    <reaction evidence="1">
        <text>a D-aminoacyl-tRNA + H2O = a tRNA + a D-alpha-amino acid + H(+)</text>
        <dbReference type="Rhea" id="RHEA:13953"/>
        <dbReference type="Rhea" id="RHEA-COMP:10123"/>
        <dbReference type="Rhea" id="RHEA-COMP:10124"/>
        <dbReference type="ChEBI" id="CHEBI:15377"/>
        <dbReference type="ChEBI" id="CHEBI:15378"/>
        <dbReference type="ChEBI" id="CHEBI:59871"/>
        <dbReference type="ChEBI" id="CHEBI:78442"/>
        <dbReference type="ChEBI" id="CHEBI:79333"/>
        <dbReference type="EC" id="3.1.1.96"/>
    </reaction>
</comment>
<comment type="subunit">
    <text evidence="1">Homodimer.</text>
</comment>
<comment type="subcellular location">
    <subcellularLocation>
        <location evidence="1">Cytoplasm</location>
    </subcellularLocation>
</comment>
<comment type="domain">
    <text evidence="1">A Gly-cisPro motif from one monomer fits into the active site of the other monomer to allow specific chiral rejection of L-amino acids.</text>
</comment>
<comment type="similarity">
    <text evidence="1">Belongs to the DTD family.</text>
</comment>
<feature type="chain" id="PRO_1000050874" description="D-aminoacyl-tRNA deacylase">
    <location>
        <begin position="1"/>
        <end position="145"/>
    </location>
</feature>
<feature type="short sequence motif" description="Gly-cisPro motif, important for rejection of L-amino acids" evidence="1">
    <location>
        <begin position="137"/>
        <end position="138"/>
    </location>
</feature>